<protein>
    <recommendedName>
        <fullName evidence="1">Probable cell division protein WhiA</fullName>
    </recommendedName>
</protein>
<organism>
    <name type="scientific">Clostridium botulinum (strain ATCC 19397 / Type A)</name>
    <dbReference type="NCBI Taxonomy" id="441770"/>
    <lineage>
        <taxon>Bacteria</taxon>
        <taxon>Bacillati</taxon>
        <taxon>Bacillota</taxon>
        <taxon>Clostridia</taxon>
        <taxon>Eubacteriales</taxon>
        <taxon>Clostridiaceae</taxon>
        <taxon>Clostridium</taxon>
    </lineage>
</organism>
<dbReference type="EMBL" id="CP000726">
    <property type="protein sequence ID" value="ABS33138.1"/>
    <property type="molecule type" value="Genomic_DNA"/>
</dbReference>
<dbReference type="RefSeq" id="WP_003357358.1">
    <property type="nucleotide sequence ID" value="NC_009697.1"/>
</dbReference>
<dbReference type="SMR" id="A7FYW9"/>
<dbReference type="GeneID" id="5187629"/>
<dbReference type="KEGG" id="cba:CLB_3431"/>
<dbReference type="HOGENOM" id="CLU_053282_0_0_9"/>
<dbReference type="GO" id="GO:0003677">
    <property type="term" value="F:DNA binding"/>
    <property type="evidence" value="ECO:0007669"/>
    <property type="project" value="UniProtKB-UniRule"/>
</dbReference>
<dbReference type="GO" id="GO:0004519">
    <property type="term" value="F:endonuclease activity"/>
    <property type="evidence" value="ECO:0007669"/>
    <property type="project" value="InterPro"/>
</dbReference>
<dbReference type="GO" id="GO:0051301">
    <property type="term" value="P:cell division"/>
    <property type="evidence" value="ECO:0007669"/>
    <property type="project" value="UniProtKB-UniRule"/>
</dbReference>
<dbReference type="GO" id="GO:0043937">
    <property type="term" value="P:regulation of sporulation"/>
    <property type="evidence" value="ECO:0007669"/>
    <property type="project" value="InterPro"/>
</dbReference>
<dbReference type="Gene3D" id="3.10.28.10">
    <property type="entry name" value="Homing endonucleases"/>
    <property type="match status" value="1"/>
</dbReference>
<dbReference type="HAMAP" id="MF_01420">
    <property type="entry name" value="HTH_type_WhiA"/>
    <property type="match status" value="1"/>
</dbReference>
<dbReference type="InterPro" id="IPR027434">
    <property type="entry name" value="Homing_endonucl"/>
</dbReference>
<dbReference type="InterPro" id="IPR004042">
    <property type="entry name" value="Intein_endonuc_central"/>
</dbReference>
<dbReference type="InterPro" id="IPR018478">
    <property type="entry name" value="Sporu_reg_WhiA_N_dom"/>
</dbReference>
<dbReference type="InterPro" id="IPR003802">
    <property type="entry name" value="Sporulation_regulator_WhiA"/>
</dbReference>
<dbReference type="InterPro" id="IPR023054">
    <property type="entry name" value="Sporulation_regulator_WhiA_C"/>
</dbReference>
<dbReference type="InterPro" id="IPR039518">
    <property type="entry name" value="WhiA_LAGLIDADG_dom"/>
</dbReference>
<dbReference type="NCBIfam" id="TIGR00647">
    <property type="entry name" value="DNA_bind_WhiA"/>
    <property type="match status" value="1"/>
</dbReference>
<dbReference type="PANTHER" id="PTHR37307">
    <property type="entry name" value="CELL DIVISION PROTEIN WHIA-RELATED"/>
    <property type="match status" value="1"/>
</dbReference>
<dbReference type="PANTHER" id="PTHR37307:SF1">
    <property type="entry name" value="CELL DIVISION PROTEIN WHIA-RELATED"/>
    <property type="match status" value="1"/>
</dbReference>
<dbReference type="Pfam" id="PF02650">
    <property type="entry name" value="HTH_WhiA"/>
    <property type="match status" value="1"/>
</dbReference>
<dbReference type="Pfam" id="PF14527">
    <property type="entry name" value="LAGLIDADG_WhiA"/>
    <property type="match status" value="1"/>
</dbReference>
<dbReference type="Pfam" id="PF10298">
    <property type="entry name" value="WhiA_N"/>
    <property type="match status" value="1"/>
</dbReference>
<dbReference type="SUPFAM" id="SSF55608">
    <property type="entry name" value="Homing endonucleases"/>
    <property type="match status" value="1"/>
</dbReference>
<dbReference type="PROSITE" id="PS50819">
    <property type="entry name" value="INTEIN_ENDONUCLEASE"/>
    <property type="match status" value="1"/>
</dbReference>
<reference key="1">
    <citation type="journal article" date="2007" name="PLoS ONE">
        <title>Analysis of the neurotoxin complex genes in Clostridium botulinum A1-A4 and B1 strains: BoNT/A3, /Ba4 and /B1 clusters are located within plasmids.</title>
        <authorList>
            <person name="Smith T.J."/>
            <person name="Hill K.K."/>
            <person name="Foley B.T."/>
            <person name="Detter J.C."/>
            <person name="Munk A.C."/>
            <person name="Bruce D.C."/>
            <person name="Doggett N.A."/>
            <person name="Smith L.A."/>
            <person name="Marks J.D."/>
            <person name="Xie G."/>
            <person name="Brettin T.S."/>
        </authorList>
    </citation>
    <scope>NUCLEOTIDE SEQUENCE [LARGE SCALE GENOMIC DNA]</scope>
    <source>
        <strain>ATCC 19397 / Type A</strain>
    </source>
</reference>
<comment type="function">
    <text evidence="1">Involved in cell division and chromosome segregation.</text>
</comment>
<comment type="similarity">
    <text evidence="1">Belongs to the WhiA family.</text>
</comment>
<feature type="chain" id="PRO_0000376458" description="Probable cell division protein WhiA">
    <location>
        <begin position="1"/>
        <end position="315"/>
    </location>
</feature>
<feature type="DNA-binding region" description="H-T-H motif" evidence="1">
    <location>
        <begin position="280"/>
        <end position="313"/>
    </location>
</feature>
<gene>
    <name evidence="1" type="primary">whiA</name>
    <name type="ordered locus">CLB_3431</name>
</gene>
<proteinExistence type="inferred from homology"/>
<accession>A7FYW9</accession>
<sequence>MSFSLKVKNEVCKHVEVNKQEAIAELSAIMKVSGTLLFTNKQFNFKITTENAAIARLVFKILKEHFGIHTEIMIKKNNSLKKNNIYIILISEEEGVKSLLKEVGIIKETINVFSLDYNIPKSIIECDECRRAYIRGAFLGGGSISNPEKTYHLEFVTHNEEYAKDLSNLINSYNLNSKVIKRKNSYIIYLKEGEQIVDLLNIIGAHASLLELENVRIMKEMRNNVNRLVNCETANLSKTVNAAVRQVESIKFIEREIGLGRLPKNLRDVAELRIKYPDESLRELGKMLNPPVGKSGVNHRLRRIEKIADELKQGI</sequence>
<name>WHIA_CLOB1</name>
<evidence type="ECO:0000255" key="1">
    <source>
        <dbReference type="HAMAP-Rule" id="MF_01420"/>
    </source>
</evidence>
<keyword id="KW-0131">Cell cycle</keyword>
<keyword id="KW-0132">Cell division</keyword>
<keyword id="KW-0238">DNA-binding</keyword>